<comment type="subcellular location">
    <subcellularLocation>
        <location evidence="3">Cell membrane</location>
        <topology evidence="3">Multi-pass membrane protein</topology>
    </subcellularLocation>
</comment>
<comment type="similarity">
    <text evidence="3">Belongs to the potassium channel family.</text>
</comment>
<reference key="1">
    <citation type="journal article" date="2004" name="Nat. Biotechnol.">
        <title>Complete genome sequence of the metabolically versatile photosynthetic bacterium Rhodopseudomonas palustris.</title>
        <authorList>
            <person name="Larimer F.W."/>
            <person name="Chain P."/>
            <person name="Hauser L."/>
            <person name="Lamerdin J.E."/>
            <person name="Malfatti S."/>
            <person name="Do L."/>
            <person name="Land M.L."/>
            <person name="Pelletier D.A."/>
            <person name="Beatty J.T."/>
            <person name="Lang A.S."/>
            <person name="Tabita F.R."/>
            <person name="Gibson J.L."/>
            <person name="Hanson T.E."/>
            <person name="Bobst C."/>
            <person name="Torres y Torres J.L."/>
            <person name="Peres C."/>
            <person name="Harrison F.H."/>
            <person name="Gibson J."/>
            <person name="Harwood C.S."/>
        </authorList>
    </citation>
    <scope>NUCLEOTIDE SEQUENCE [LARGE SCALE GENOMIC DNA]</scope>
    <source>
        <strain>ATCC BAA-98 / CGA009</strain>
    </source>
</reference>
<reference key="2">
    <citation type="journal article" date="1992" name="J. Bacteriol.">
        <title>Anaerobic growth of Rhodopseudomonas palustris on 4-hydroxybenzoate is dependent on AadR, a member of the cyclic AMP receptor protein family of transcriptional regulators.</title>
        <authorList>
            <person name="Dispensa M."/>
            <person name="Thomas C.T."/>
            <person name="Kim M.-K."/>
            <person name="Perrotta J.A."/>
            <person name="Gibson J."/>
            <person name="Harwood C.S."/>
        </authorList>
    </citation>
    <scope>NUCLEOTIDE SEQUENCE [GENOMIC DNA] OF 1-15</scope>
    <source>
        <strain>ATCC BAA-98 / CGA009</strain>
    </source>
</reference>
<sequence>MRDETPAYLRARHYFYEILESQAQTSRMGVIVNRFIVFFIVLSVGITVMESVPAMREDYGRLFQALELLCLVMFSIEYYIRIWIAPEHLPYHHMSPLRAAWAYMISPQGIVDCISVMPLWIALFGPDDLRVLIILRMLRLLKFARYSSGMRSLLEVLESERRALMACLVILACATLVSATAMHIAEGHVQPEKFGTIPDAMWWAIVTLSTIGYGDVVPATGIGRMVASATIICGLIMIALPVGIVANAFSEVIHRRDFIVNWSMVARVPLFSHLTAGDIAHIMQLLQARQIERGEVVFRRGEPATAMYFIAEGDVEIELGPEDKGRRIRLGTGHFFGEIAVLKRVERSATVKAVSRTRLLVLDGADLRALIAREPSIARKINQIVEGRTGRNLNLEIADLEGQADVSVEENA</sequence>
<protein>
    <recommendedName>
        <fullName>Putative potassium channel protein RPA4233</fullName>
    </recommendedName>
</protein>
<accession>Q02006</accession>
<dbReference type="EMBL" id="BX572606">
    <property type="protein sequence ID" value="CAE29674.1"/>
    <property type="molecule type" value="Genomic_DNA"/>
</dbReference>
<dbReference type="EMBL" id="M92426">
    <property type="protein sequence ID" value="AAA26091.1"/>
    <property type="molecule type" value="Genomic_DNA"/>
</dbReference>
<dbReference type="PIR" id="C43334">
    <property type="entry name" value="C43334"/>
</dbReference>
<dbReference type="RefSeq" id="WP_011159768.1">
    <property type="nucleotide sequence ID" value="NZ_CP116810.1"/>
</dbReference>
<dbReference type="SMR" id="Q02006"/>
<dbReference type="STRING" id="258594.RPA4233"/>
<dbReference type="TCDB" id="1.A.1.24.1">
    <property type="family name" value="the voltage-gated ion channel (vic) superfamily"/>
</dbReference>
<dbReference type="GeneID" id="66895359"/>
<dbReference type="eggNOG" id="COG0664">
    <property type="taxonomic scope" value="Bacteria"/>
</dbReference>
<dbReference type="HOGENOM" id="CLU_011722_1_2_5"/>
<dbReference type="PhylomeDB" id="Q02006"/>
<dbReference type="GO" id="GO:0008076">
    <property type="term" value="C:voltage-gated potassium channel complex"/>
    <property type="evidence" value="ECO:0007669"/>
    <property type="project" value="InterPro"/>
</dbReference>
<dbReference type="GO" id="GO:0005249">
    <property type="term" value="F:voltage-gated potassium channel activity"/>
    <property type="evidence" value="ECO:0007669"/>
    <property type="project" value="InterPro"/>
</dbReference>
<dbReference type="GO" id="GO:0001508">
    <property type="term" value="P:action potential"/>
    <property type="evidence" value="ECO:0007669"/>
    <property type="project" value="TreeGrafter"/>
</dbReference>
<dbReference type="CDD" id="cd00038">
    <property type="entry name" value="CAP_ED"/>
    <property type="match status" value="1"/>
</dbReference>
<dbReference type="FunFam" id="1.10.287.70:FF:000028">
    <property type="entry name" value="potassium voltage-gated channel subfamily D member 3"/>
    <property type="match status" value="1"/>
</dbReference>
<dbReference type="Gene3D" id="1.10.287.70">
    <property type="match status" value="1"/>
</dbReference>
<dbReference type="Gene3D" id="2.60.120.10">
    <property type="entry name" value="Jelly Rolls"/>
    <property type="match status" value="1"/>
</dbReference>
<dbReference type="InterPro" id="IPR018488">
    <property type="entry name" value="cNMP-bd_CS"/>
</dbReference>
<dbReference type="InterPro" id="IPR000595">
    <property type="entry name" value="cNMP-bd_dom"/>
</dbReference>
<dbReference type="InterPro" id="IPR018490">
    <property type="entry name" value="cNMP-bd_dom_sf"/>
</dbReference>
<dbReference type="InterPro" id="IPR005821">
    <property type="entry name" value="Ion_trans_dom"/>
</dbReference>
<dbReference type="InterPro" id="IPR014710">
    <property type="entry name" value="RmlC-like_jellyroll"/>
</dbReference>
<dbReference type="InterPro" id="IPR028325">
    <property type="entry name" value="VG_K_chnl"/>
</dbReference>
<dbReference type="PANTHER" id="PTHR11537:SF254">
    <property type="entry name" value="POTASSIUM VOLTAGE-GATED CHANNEL PROTEIN SHAB"/>
    <property type="match status" value="1"/>
</dbReference>
<dbReference type="PANTHER" id="PTHR11537">
    <property type="entry name" value="VOLTAGE-GATED POTASSIUM CHANNEL"/>
    <property type="match status" value="1"/>
</dbReference>
<dbReference type="Pfam" id="PF00027">
    <property type="entry name" value="cNMP_binding"/>
    <property type="match status" value="1"/>
</dbReference>
<dbReference type="Pfam" id="PF00520">
    <property type="entry name" value="Ion_trans"/>
    <property type="match status" value="1"/>
</dbReference>
<dbReference type="PRINTS" id="PR00169">
    <property type="entry name" value="KCHANNEL"/>
</dbReference>
<dbReference type="SMART" id="SM00100">
    <property type="entry name" value="cNMP"/>
    <property type="match status" value="1"/>
</dbReference>
<dbReference type="SUPFAM" id="SSF51206">
    <property type="entry name" value="cAMP-binding domain-like"/>
    <property type="match status" value="1"/>
</dbReference>
<dbReference type="SUPFAM" id="SSF81324">
    <property type="entry name" value="Voltage-gated potassium channels"/>
    <property type="match status" value="1"/>
</dbReference>
<dbReference type="PROSITE" id="PS00889">
    <property type="entry name" value="CNMP_BINDING_2"/>
    <property type="match status" value="1"/>
</dbReference>
<dbReference type="PROSITE" id="PS50042">
    <property type="entry name" value="CNMP_BINDING_3"/>
    <property type="match status" value="1"/>
</dbReference>
<keyword id="KW-1003">Cell membrane</keyword>
<keyword id="KW-0407">Ion channel</keyword>
<keyword id="KW-0406">Ion transport</keyword>
<keyword id="KW-0472">Membrane</keyword>
<keyword id="KW-0630">Potassium</keyword>
<keyword id="KW-0631">Potassium channel</keyword>
<keyword id="KW-0633">Potassium transport</keyword>
<keyword id="KW-0812">Transmembrane</keyword>
<keyword id="KW-1133">Transmembrane helix</keyword>
<keyword id="KW-0813">Transport</keyword>
<organism>
    <name type="scientific">Rhodopseudomonas palustris (strain ATCC BAA-98 / CGA009)</name>
    <dbReference type="NCBI Taxonomy" id="258594"/>
    <lineage>
        <taxon>Bacteria</taxon>
        <taxon>Pseudomonadati</taxon>
        <taxon>Pseudomonadota</taxon>
        <taxon>Alphaproteobacteria</taxon>
        <taxon>Hyphomicrobiales</taxon>
        <taxon>Nitrobacteraceae</taxon>
        <taxon>Rhodopseudomonas</taxon>
    </lineage>
</organism>
<proteinExistence type="inferred from homology"/>
<name>Y4233_RHOPA</name>
<evidence type="ECO:0000250" key="1"/>
<evidence type="ECO:0000255" key="2"/>
<evidence type="ECO:0000305" key="3"/>
<gene>
    <name type="ordered locus">RPA4233</name>
</gene>
<feature type="chain" id="PRO_0000054103" description="Putative potassium channel protein RPA4233">
    <location>
        <begin position="1"/>
        <end position="412"/>
    </location>
</feature>
<feature type="transmembrane region" description="Helical" evidence="2">
    <location>
        <begin position="35"/>
        <end position="55"/>
    </location>
</feature>
<feature type="transmembrane region" description="Helical" evidence="2">
    <location>
        <begin position="65"/>
        <end position="85"/>
    </location>
</feature>
<feature type="transmembrane region" description="Helical" evidence="2">
    <location>
        <begin position="164"/>
        <end position="184"/>
    </location>
</feature>
<feature type="transmembrane region" description="Helical" evidence="2">
    <location>
        <begin position="202"/>
        <end position="222"/>
    </location>
</feature>
<feature type="transmembrane region" description="Helical" evidence="2">
    <location>
        <begin position="225"/>
        <end position="245"/>
    </location>
</feature>
<feature type="short sequence motif" description="Selectivity filter" evidence="1">
    <location>
        <begin position="210"/>
        <end position="215"/>
    </location>
</feature>
<feature type="binding site">
    <location>
        <begin position="270"/>
        <end position="388"/>
    </location>
    <ligand>
        <name>a nucleoside 3',5'-cyclic phosphate</name>
        <dbReference type="ChEBI" id="CHEBI:58464"/>
    </ligand>
</feature>